<feature type="chain" id="PRO_0000385242" description="Nuclear cap-binding protein subunit 1">
    <location>
        <begin position="1"/>
        <end position="800"/>
    </location>
</feature>
<feature type="domain" description="MIF4G">
    <location>
        <begin position="31"/>
        <end position="243"/>
    </location>
</feature>
<feature type="region of interest" description="Disordered" evidence="2">
    <location>
        <begin position="1"/>
        <end position="26"/>
    </location>
</feature>
<feature type="region of interest" description="Disordered" evidence="2">
    <location>
        <begin position="669"/>
        <end position="700"/>
    </location>
</feature>
<feature type="modified residue" description="Phosphothreonine" evidence="1">
    <location>
        <position position="9"/>
    </location>
</feature>
<keyword id="KW-0506">mRNA capping</keyword>
<keyword id="KW-0507">mRNA processing</keyword>
<keyword id="KW-0508">mRNA splicing</keyword>
<keyword id="KW-0539">Nucleus</keyword>
<keyword id="KW-0597">Phosphoprotein</keyword>
<keyword id="KW-0943">RNA-mediated gene silencing</keyword>
<reference key="1">
    <citation type="journal article" date="2007" name="Nature">
        <title>Evolution of genes and genomes on the Drosophila phylogeny.</title>
        <authorList>
            <consortium name="Drosophila 12 genomes consortium"/>
        </authorList>
    </citation>
    <scope>NUCLEOTIDE SEQUENCE [LARGE SCALE GENOMIC DNA]</scope>
    <source>
        <strain>Tai18E2 / Tucson 14021-0261.01</strain>
    </source>
</reference>
<gene>
    <name type="primary">Cbp80</name>
    <name type="ORF">GE16357</name>
</gene>
<sequence length="800" mass="93156">MSRRRAHDTEDEGYDHRRNKRRRVSENQEIEDRLESLILRVGERSTSSVESNLEGLVSVLEADLGTFRLKILRILSDCAVRMPEKCTVYTTLVGLLNAKNYKFGGEFVDHMVKTFKESLKLCRWDAARYSLRFLADLVNCHVISATSLLQLLDTMIDVSNEDTVPQVRRDWFVFAVLSTLPWVGRDLYEKKESALESLLLRIEVYLNKRSKKHHNALRVWSSDAPHPQEEYLDCLWAQIRKLRQDNWAEKHIPRPYLVFDSILCEALQHNLPAIVPPPHHDNFEYPMPWVVYRMFDYTDCPDGPNLPGAHSIERFLIEEHLHHIIETYHHERKDCAAQLLSFPFKHKIPLEYCIVEVIFAELFHMPTPRYLDICYGSILIELCKLQPATLPQVLAQATEILFMRIDSMNTSCFDRFVNWFSYHLSNFKFTWSWDEWDSCLLLDGEHPRPKFIQEVLQKCLRLSYHQRITEMMPTTYAKLIPLTPVPNYKYANEEAANLPGTTVAHQLVVAIRQKCTPEEVVNILKDIPSSGYSGEEMSDGSFNALKIDVFVQTLLNLGSKSFSHSFAAISKFHSVFRALAETEEAQICILHNIYELWSSHQQMMVVLIDKLLKLQIVDCSAVATWIFSKEMTGEFTKMYLWEILHLTIKKMNKHVIKLNSELSEAKDKLAKADSSSSDSEDDSSHKRKKPITHADKPSEEVVERMEEKLEAANVNQKRLFLIVFQRFIMILSEHLLRSDTDGRDPDTDWYRWTIGRLQQVFLMHHEQVQKYSSTLETLLFTSDLDTHILEVFQQFVALRA</sequence>
<name>NCBP1_DROYA</name>
<accession>B4Q034</accession>
<evidence type="ECO:0000250" key="1"/>
<evidence type="ECO:0000256" key="2">
    <source>
        <dbReference type="SAM" id="MobiDB-lite"/>
    </source>
</evidence>
<evidence type="ECO:0000305" key="3"/>
<comment type="function">
    <text evidence="1">Component of the cap-binding complex (CBC), which binds cotranscriptionally to the 5'-cap of pre-mRNAs and is involved in various processes such as pre-mRNA splicing and RNA-mediated gene silencing (RNAi). The CBC complex is involved in miRNA-mediated RNA interference via its interaction with Ars2 and is required for primary microRNAs (miRNAs) processing. Also involved in innate immunity via the short interfering RNAs (siRNAs) processing machinery by restricting the viral RNA production. In the CBC complex, Cbp80 does not bind directly capped RNAs (m7GpppG-capped RNA) but is required to stabilize the movement of the N-terminal loop of Cbp20 and lock the CBC into a high affinity cap-binding state with the cap structure (By similarity).</text>
</comment>
<comment type="subunit">
    <text evidence="1">Component of the nuclear cap-binding complex (CBC), a heterodimer composed of Cbp80 and Cbp20 that interacts with m7GpppG-capped RNA.</text>
</comment>
<comment type="subcellular location">
    <subcellularLocation>
        <location evidence="1">Nucleus</location>
    </subcellularLocation>
</comment>
<comment type="similarity">
    <text evidence="3">Belongs to the NCBP1 family.</text>
</comment>
<dbReference type="EMBL" id="CM000162">
    <property type="protein sequence ID" value="EDX01186.1"/>
    <property type="molecule type" value="Genomic_DNA"/>
</dbReference>
<dbReference type="SMR" id="B4Q034"/>
<dbReference type="EnsemblMetazoa" id="FBtr0262875">
    <property type="protein sequence ID" value="FBpp0261367"/>
    <property type="gene ID" value="FBgn0233887"/>
</dbReference>
<dbReference type="EnsemblMetazoa" id="XM_002100042.3">
    <property type="protein sequence ID" value="XP_002100078.1"/>
    <property type="gene ID" value="LOC6524215"/>
</dbReference>
<dbReference type="GeneID" id="6524215"/>
<dbReference type="KEGG" id="dya:Dyak_GE16357"/>
<dbReference type="CTD" id="44409"/>
<dbReference type="eggNOG" id="KOG1104">
    <property type="taxonomic scope" value="Eukaryota"/>
</dbReference>
<dbReference type="HOGENOM" id="CLU_013207_0_0_1"/>
<dbReference type="OMA" id="CAAEGLM"/>
<dbReference type="OrthoDB" id="10252707at2759"/>
<dbReference type="PhylomeDB" id="B4Q034"/>
<dbReference type="ChiTaRS" id="Cbp80">
    <property type="organism name" value="fly"/>
</dbReference>
<dbReference type="Proteomes" id="UP000002282">
    <property type="component" value="Chromosome X"/>
</dbReference>
<dbReference type="GO" id="GO:0005846">
    <property type="term" value="C:nuclear cap binding complex"/>
    <property type="evidence" value="ECO:0007669"/>
    <property type="project" value="InterPro"/>
</dbReference>
<dbReference type="GO" id="GO:0005634">
    <property type="term" value="C:nucleus"/>
    <property type="evidence" value="ECO:0007669"/>
    <property type="project" value="UniProtKB-SubCell"/>
</dbReference>
<dbReference type="GO" id="GO:0099524">
    <property type="term" value="C:postsynaptic cytosol"/>
    <property type="evidence" value="ECO:0007669"/>
    <property type="project" value="EnsemblMetazoa"/>
</dbReference>
<dbReference type="GO" id="GO:0099523">
    <property type="term" value="C:presynaptic cytosol"/>
    <property type="evidence" value="ECO:0007669"/>
    <property type="project" value="EnsemblMetazoa"/>
</dbReference>
<dbReference type="GO" id="GO:0003729">
    <property type="term" value="F:mRNA binding"/>
    <property type="evidence" value="ECO:0007669"/>
    <property type="project" value="TreeGrafter"/>
</dbReference>
<dbReference type="GO" id="GO:0000339">
    <property type="term" value="F:RNA cap binding"/>
    <property type="evidence" value="ECO:0007669"/>
    <property type="project" value="InterPro"/>
</dbReference>
<dbReference type="GO" id="GO:0006370">
    <property type="term" value="P:7-methylguanosine mRNA capping"/>
    <property type="evidence" value="ECO:0007669"/>
    <property type="project" value="UniProtKB-KW"/>
</dbReference>
<dbReference type="GO" id="GO:0006406">
    <property type="term" value="P:mRNA export from nucleus"/>
    <property type="evidence" value="ECO:0007669"/>
    <property type="project" value="InterPro"/>
</dbReference>
<dbReference type="GO" id="GO:0045071">
    <property type="term" value="P:negative regulation of viral genome replication"/>
    <property type="evidence" value="ECO:0007669"/>
    <property type="project" value="EnsemblMetazoa"/>
</dbReference>
<dbReference type="GO" id="GO:0000184">
    <property type="term" value="P:nuclear-transcribed mRNA catabolic process, nonsense-mediated decay"/>
    <property type="evidence" value="ECO:0007669"/>
    <property type="project" value="TreeGrafter"/>
</dbReference>
<dbReference type="GO" id="GO:0031053">
    <property type="term" value="P:primary miRNA processing"/>
    <property type="evidence" value="ECO:0007669"/>
    <property type="project" value="EnsemblMetazoa"/>
</dbReference>
<dbReference type="GO" id="GO:0035194">
    <property type="term" value="P:regulatory ncRNA-mediated post-transcriptional gene silencing"/>
    <property type="evidence" value="ECO:0007669"/>
    <property type="project" value="EnsemblMetazoa"/>
</dbReference>
<dbReference type="GO" id="GO:0008380">
    <property type="term" value="P:RNA splicing"/>
    <property type="evidence" value="ECO:0007669"/>
    <property type="project" value="UniProtKB-KW"/>
</dbReference>
<dbReference type="GO" id="GO:0030422">
    <property type="term" value="P:siRNA processing"/>
    <property type="evidence" value="ECO:0007669"/>
    <property type="project" value="EnsemblMetazoa"/>
</dbReference>
<dbReference type="FunFam" id="1.25.40.180:FF:000010">
    <property type="entry name" value="Nuclear cap-binding protein subunit 1"/>
    <property type="match status" value="1"/>
</dbReference>
<dbReference type="FunFam" id="1.25.40.180:FF:000041">
    <property type="entry name" value="Nuclear cap-binding protein subunit 1"/>
    <property type="match status" value="1"/>
</dbReference>
<dbReference type="Gene3D" id="1.25.40.180">
    <property type="match status" value="3"/>
</dbReference>
<dbReference type="InterPro" id="IPR016024">
    <property type="entry name" value="ARM-type_fold"/>
</dbReference>
<dbReference type="InterPro" id="IPR027159">
    <property type="entry name" value="CBP80"/>
</dbReference>
<dbReference type="InterPro" id="IPR015172">
    <property type="entry name" value="MIF4G-like_typ-1"/>
</dbReference>
<dbReference type="InterPro" id="IPR015174">
    <property type="entry name" value="MIF4G-like_typ-2"/>
</dbReference>
<dbReference type="InterPro" id="IPR003890">
    <property type="entry name" value="MIF4G-like_typ-3"/>
</dbReference>
<dbReference type="PANTHER" id="PTHR12412">
    <property type="entry name" value="CAP BINDING PROTEIN"/>
    <property type="match status" value="1"/>
</dbReference>
<dbReference type="PANTHER" id="PTHR12412:SF2">
    <property type="entry name" value="NUCLEAR CAP-BINDING PROTEIN SUBUNIT 1"/>
    <property type="match status" value="1"/>
</dbReference>
<dbReference type="Pfam" id="PF02854">
    <property type="entry name" value="MIF4G"/>
    <property type="match status" value="1"/>
</dbReference>
<dbReference type="Pfam" id="PF09088">
    <property type="entry name" value="MIF4G_like"/>
    <property type="match status" value="1"/>
</dbReference>
<dbReference type="Pfam" id="PF09090">
    <property type="entry name" value="MIF4G_like_2"/>
    <property type="match status" value="1"/>
</dbReference>
<dbReference type="SMART" id="SM00543">
    <property type="entry name" value="MIF4G"/>
    <property type="match status" value="1"/>
</dbReference>
<dbReference type="SUPFAM" id="SSF48371">
    <property type="entry name" value="ARM repeat"/>
    <property type="match status" value="3"/>
</dbReference>
<protein>
    <recommendedName>
        <fullName>Nuclear cap-binding protein subunit 1</fullName>
    </recommendedName>
    <alternativeName>
        <fullName>80 kDa nuclear cap-binding protein</fullName>
        <shortName>CBP80</shortName>
        <shortName>NCBP 80 kDa subunit</shortName>
    </alternativeName>
</protein>
<proteinExistence type="inferred from homology"/>
<organism>
    <name type="scientific">Drosophila yakuba</name>
    <name type="common">Fruit fly</name>
    <dbReference type="NCBI Taxonomy" id="7245"/>
    <lineage>
        <taxon>Eukaryota</taxon>
        <taxon>Metazoa</taxon>
        <taxon>Ecdysozoa</taxon>
        <taxon>Arthropoda</taxon>
        <taxon>Hexapoda</taxon>
        <taxon>Insecta</taxon>
        <taxon>Pterygota</taxon>
        <taxon>Neoptera</taxon>
        <taxon>Endopterygota</taxon>
        <taxon>Diptera</taxon>
        <taxon>Brachycera</taxon>
        <taxon>Muscomorpha</taxon>
        <taxon>Ephydroidea</taxon>
        <taxon>Drosophilidae</taxon>
        <taxon>Drosophila</taxon>
        <taxon>Sophophora</taxon>
    </lineage>
</organism>